<evidence type="ECO:0000255" key="1">
    <source>
        <dbReference type="HAMAP-Rule" id="MF_00379"/>
    </source>
</evidence>
<gene>
    <name evidence="1" type="primary">mnmE</name>
    <name evidence="1" type="synonym">trmE</name>
    <name type="ordered locus">Helmi_10280</name>
    <name type="ORF">HM1_0912</name>
</gene>
<accession>B0TAB6</accession>
<feature type="chain" id="PRO_0000345799" description="tRNA modification GTPase MnmE">
    <location>
        <begin position="1"/>
        <end position="466"/>
    </location>
</feature>
<feature type="domain" description="TrmE-type G">
    <location>
        <begin position="222"/>
        <end position="382"/>
    </location>
</feature>
<feature type="binding site" evidence="1">
    <location>
        <position position="22"/>
    </location>
    <ligand>
        <name>(6S)-5-formyl-5,6,7,8-tetrahydrofolate</name>
        <dbReference type="ChEBI" id="CHEBI:57457"/>
    </ligand>
</feature>
<feature type="binding site" evidence="1">
    <location>
        <position position="87"/>
    </location>
    <ligand>
        <name>(6S)-5-formyl-5,6,7,8-tetrahydrofolate</name>
        <dbReference type="ChEBI" id="CHEBI:57457"/>
    </ligand>
</feature>
<feature type="binding site" evidence="1">
    <location>
        <position position="126"/>
    </location>
    <ligand>
        <name>(6S)-5-formyl-5,6,7,8-tetrahydrofolate</name>
        <dbReference type="ChEBI" id="CHEBI:57457"/>
    </ligand>
</feature>
<feature type="binding site" evidence="1">
    <location>
        <begin position="232"/>
        <end position="237"/>
    </location>
    <ligand>
        <name>GTP</name>
        <dbReference type="ChEBI" id="CHEBI:37565"/>
    </ligand>
</feature>
<feature type="binding site" evidence="1">
    <location>
        <position position="232"/>
    </location>
    <ligand>
        <name>K(+)</name>
        <dbReference type="ChEBI" id="CHEBI:29103"/>
    </ligand>
</feature>
<feature type="binding site" evidence="1">
    <location>
        <position position="236"/>
    </location>
    <ligand>
        <name>Mg(2+)</name>
        <dbReference type="ChEBI" id="CHEBI:18420"/>
    </ligand>
</feature>
<feature type="binding site" evidence="1">
    <location>
        <begin position="251"/>
        <end position="257"/>
    </location>
    <ligand>
        <name>GTP</name>
        <dbReference type="ChEBI" id="CHEBI:37565"/>
    </ligand>
</feature>
<feature type="binding site" evidence="1">
    <location>
        <position position="251"/>
    </location>
    <ligand>
        <name>K(+)</name>
        <dbReference type="ChEBI" id="CHEBI:29103"/>
    </ligand>
</feature>
<feature type="binding site" evidence="1">
    <location>
        <position position="253"/>
    </location>
    <ligand>
        <name>K(+)</name>
        <dbReference type="ChEBI" id="CHEBI:29103"/>
    </ligand>
</feature>
<feature type="binding site" evidence="1">
    <location>
        <position position="256"/>
    </location>
    <ligand>
        <name>K(+)</name>
        <dbReference type="ChEBI" id="CHEBI:29103"/>
    </ligand>
</feature>
<feature type="binding site" evidence="1">
    <location>
        <position position="257"/>
    </location>
    <ligand>
        <name>Mg(2+)</name>
        <dbReference type="ChEBI" id="CHEBI:18420"/>
    </ligand>
</feature>
<feature type="binding site" evidence="1">
    <location>
        <begin position="276"/>
        <end position="279"/>
    </location>
    <ligand>
        <name>GTP</name>
        <dbReference type="ChEBI" id="CHEBI:37565"/>
    </ligand>
</feature>
<feature type="binding site" evidence="1">
    <location>
        <position position="466"/>
    </location>
    <ligand>
        <name>(6S)-5-formyl-5,6,7,8-tetrahydrofolate</name>
        <dbReference type="ChEBI" id="CHEBI:57457"/>
    </ligand>
</feature>
<protein>
    <recommendedName>
        <fullName evidence="1">tRNA modification GTPase MnmE</fullName>
        <ecNumber evidence="1">3.6.-.-</ecNumber>
    </recommendedName>
</protein>
<comment type="function">
    <text evidence="1">Exhibits a very high intrinsic GTPase hydrolysis rate. Involved in the addition of a carboxymethylaminomethyl (cmnm) group at the wobble position (U34) of certain tRNAs, forming tRNA-cmnm(5)s(2)U34.</text>
</comment>
<comment type="cofactor">
    <cofactor evidence="1">
        <name>K(+)</name>
        <dbReference type="ChEBI" id="CHEBI:29103"/>
    </cofactor>
    <text evidence="1">Binds 1 potassium ion per subunit.</text>
</comment>
<comment type="subunit">
    <text evidence="1">Homodimer. Heterotetramer of two MnmE and two MnmG subunits.</text>
</comment>
<comment type="subcellular location">
    <subcellularLocation>
        <location evidence="1">Cytoplasm</location>
    </subcellularLocation>
</comment>
<comment type="similarity">
    <text evidence="1">Belongs to the TRAFAC class TrmE-Era-EngA-EngB-Septin-like GTPase superfamily. TrmE GTPase family.</text>
</comment>
<organism>
    <name type="scientific">Heliobacterium modesticaldum (strain ATCC 51547 / Ice1)</name>
    <dbReference type="NCBI Taxonomy" id="498761"/>
    <lineage>
        <taxon>Bacteria</taxon>
        <taxon>Bacillati</taxon>
        <taxon>Bacillota</taxon>
        <taxon>Clostridia</taxon>
        <taxon>Eubacteriales</taxon>
        <taxon>Heliobacteriaceae</taxon>
        <taxon>Heliomicrobium</taxon>
    </lineage>
</organism>
<proteinExistence type="inferred from homology"/>
<dbReference type="EC" id="3.6.-.-" evidence="1"/>
<dbReference type="EMBL" id="CP000930">
    <property type="protein sequence ID" value="ABZ83653.1"/>
    <property type="molecule type" value="Genomic_DNA"/>
</dbReference>
<dbReference type="RefSeq" id="WP_012282176.1">
    <property type="nucleotide sequence ID" value="NC_010337.2"/>
</dbReference>
<dbReference type="SMR" id="B0TAB6"/>
<dbReference type="STRING" id="498761.HM1_0912"/>
<dbReference type="KEGG" id="hmo:HM1_0912"/>
<dbReference type="eggNOG" id="COG0486">
    <property type="taxonomic scope" value="Bacteria"/>
</dbReference>
<dbReference type="HOGENOM" id="CLU_019624_4_1_9"/>
<dbReference type="OrthoDB" id="9805918at2"/>
<dbReference type="Proteomes" id="UP000008550">
    <property type="component" value="Chromosome"/>
</dbReference>
<dbReference type="GO" id="GO:0005829">
    <property type="term" value="C:cytosol"/>
    <property type="evidence" value="ECO:0007669"/>
    <property type="project" value="TreeGrafter"/>
</dbReference>
<dbReference type="GO" id="GO:0005525">
    <property type="term" value="F:GTP binding"/>
    <property type="evidence" value="ECO:0007669"/>
    <property type="project" value="UniProtKB-UniRule"/>
</dbReference>
<dbReference type="GO" id="GO:0003924">
    <property type="term" value="F:GTPase activity"/>
    <property type="evidence" value="ECO:0007669"/>
    <property type="project" value="UniProtKB-UniRule"/>
</dbReference>
<dbReference type="GO" id="GO:0046872">
    <property type="term" value="F:metal ion binding"/>
    <property type="evidence" value="ECO:0007669"/>
    <property type="project" value="UniProtKB-KW"/>
</dbReference>
<dbReference type="GO" id="GO:0030488">
    <property type="term" value="P:tRNA methylation"/>
    <property type="evidence" value="ECO:0007669"/>
    <property type="project" value="TreeGrafter"/>
</dbReference>
<dbReference type="GO" id="GO:0002098">
    <property type="term" value="P:tRNA wobble uridine modification"/>
    <property type="evidence" value="ECO:0007669"/>
    <property type="project" value="TreeGrafter"/>
</dbReference>
<dbReference type="CDD" id="cd04164">
    <property type="entry name" value="trmE"/>
    <property type="match status" value="1"/>
</dbReference>
<dbReference type="CDD" id="cd14858">
    <property type="entry name" value="TrmE_N"/>
    <property type="match status" value="1"/>
</dbReference>
<dbReference type="FunFam" id="3.30.1360.120:FF:000003">
    <property type="entry name" value="tRNA modification GTPase MnmE"/>
    <property type="match status" value="1"/>
</dbReference>
<dbReference type="FunFam" id="3.40.50.300:FF:000494">
    <property type="entry name" value="tRNA modification GTPase MnmE"/>
    <property type="match status" value="1"/>
</dbReference>
<dbReference type="Gene3D" id="3.40.50.300">
    <property type="entry name" value="P-loop containing nucleotide triphosphate hydrolases"/>
    <property type="match status" value="1"/>
</dbReference>
<dbReference type="Gene3D" id="3.30.1360.120">
    <property type="entry name" value="Probable tRNA modification gtpase trme, domain 1"/>
    <property type="match status" value="1"/>
</dbReference>
<dbReference type="Gene3D" id="1.20.120.430">
    <property type="entry name" value="tRNA modification GTPase MnmE domain 2"/>
    <property type="match status" value="1"/>
</dbReference>
<dbReference type="HAMAP" id="MF_00379">
    <property type="entry name" value="GTPase_MnmE"/>
    <property type="match status" value="1"/>
</dbReference>
<dbReference type="InterPro" id="IPR031168">
    <property type="entry name" value="G_TrmE"/>
</dbReference>
<dbReference type="InterPro" id="IPR006073">
    <property type="entry name" value="GTP-bd"/>
</dbReference>
<dbReference type="InterPro" id="IPR018948">
    <property type="entry name" value="GTP-bd_TrmE_N"/>
</dbReference>
<dbReference type="InterPro" id="IPR004520">
    <property type="entry name" value="GTPase_MnmE"/>
</dbReference>
<dbReference type="InterPro" id="IPR027368">
    <property type="entry name" value="MnmE_dom2"/>
</dbReference>
<dbReference type="InterPro" id="IPR025867">
    <property type="entry name" value="MnmE_helical"/>
</dbReference>
<dbReference type="InterPro" id="IPR027417">
    <property type="entry name" value="P-loop_NTPase"/>
</dbReference>
<dbReference type="InterPro" id="IPR005225">
    <property type="entry name" value="Small_GTP-bd"/>
</dbReference>
<dbReference type="InterPro" id="IPR027266">
    <property type="entry name" value="TrmE/GcvT_dom1"/>
</dbReference>
<dbReference type="NCBIfam" id="TIGR00450">
    <property type="entry name" value="mnmE_trmE_thdF"/>
    <property type="match status" value="1"/>
</dbReference>
<dbReference type="NCBIfam" id="NF003661">
    <property type="entry name" value="PRK05291.1-3"/>
    <property type="match status" value="1"/>
</dbReference>
<dbReference type="NCBIfam" id="TIGR00231">
    <property type="entry name" value="small_GTP"/>
    <property type="match status" value="1"/>
</dbReference>
<dbReference type="PANTHER" id="PTHR42714">
    <property type="entry name" value="TRNA MODIFICATION GTPASE GTPBP3"/>
    <property type="match status" value="1"/>
</dbReference>
<dbReference type="PANTHER" id="PTHR42714:SF2">
    <property type="entry name" value="TRNA MODIFICATION GTPASE GTPBP3, MITOCHONDRIAL"/>
    <property type="match status" value="1"/>
</dbReference>
<dbReference type="Pfam" id="PF01926">
    <property type="entry name" value="MMR_HSR1"/>
    <property type="match status" value="1"/>
</dbReference>
<dbReference type="Pfam" id="PF12631">
    <property type="entry name" value="MnmE_helical"/>
    <property type="match status" value="1"/>
</dbReference>
<dbReference type="Pfam" id="PF10396">
    <property type="entry name" value="TrmE_N"/>
    <property type="match status" value="1"/>
</dbReference>
<dbReference type="PRINTS" id="PR00449">
    <property type="entry name" value="RASTRNSFRMNG"/>
</dbReference>
<dbReference type="SUPFAM" id="SSF52540">
    <property type="entry name" value="P-loop containing nucleoside triphosphate hydrolases"/>
    <property type="match status" value="1"/>
</dbReference>
<dbReference type="SUPFAM" id="SSF116878">
    <property type="entry name" value="TrmE connector domain"/>
    <property type="match status" value="1"/>
</dbReference>
<dbReference type="PROSITE" id="PS51709">
    <property type="entry name" value="G_TRME"/>
    <property type="match status" value="1"/>
</dbReference>
<keyword id="KW-0963">Cytoplasm</keyword>
<keyword id="KW-0342">GTP-binding</keyword>
<keyword id="KW-0378">Hydrolase</keyword>
<keyword id="KW-0460">Magnesium</keyword>
<keyword id="KW-0479">Metal-binding</keyword>
<keyword id="KW-0547">Nucleotide-binding</keyword>
<keyword id="KW-0630">Potassium</keyword>
<keyword id="KW-1185">Reference proteome</keyword>
<keyword id="KW-0819">tRNA processing</keyword>
<sequence>MVGDTIAAVATPPGEGGIGIVRVSGPGARDVLKAVFRPRYGRGVDDWASHTLHLGTIIHPDDHRVIDEALVAWMVAPRTFTTEDVVEFHCHGGSVPVRETLGAVLRAGARLAEPGEFTRRAFLGGRLDLAQAEAIIEVIRAKTRDGLGAAVSQLEGQLSRRIRKVRDDLLALLAHLEAMIDFPEEDLPDIGSERICTDLMQIQRQIGDMLERSRTGRVLREGWRTVIVGRPNVGKSSLMNALLDEQRAIVTEIPGTTRDAIEEYIDLGGIPLRIVDTAGIRETEDVVERIGVEKTREYLEKADLALVVLDGSDSLTAEDETLLLSLAGRPAVVLVNKSDLAVRRLDEKRLRSLVGEMPIISVSAKEGWGLKELTELIRRMVYGDDGLGYAPDGGRLALVTQARHREALERSYAHLRQALDAVAHGASPDFLTIDLKAAWEALGEITGDTVGEDILDKIFSSFCIGK</sequence>
<name>MNME_HELMI</name>
<reference key="1">
    <citation type="journal article" date="2008" name="J. Bacteriol.">
        <title>The genome of Heliobacterium modesticaldum, a phototrophic representative of the Firmicutes containing the simplest photosynthetic apparatus.</title>
        <authorList>
            <person name="Sattley W.M."/>
            <person name="Madigan M.T."/>
            <person name="Swingley W.D."/>
            <person name="Cheung P.C."/>
            <person name="Clocksin K.M."/>
            <person name="Conrad A.L."/>
            <person name="Dejesa L.C."/>
            <person name="Honchak B.M."/>
            <person name="Jung D.O."/>
            <person name="Karbach L.E."/>
            <person name="Kurdoglu A."/>
            <person name="Lahiri S."/>
            <person name="Mastrian S.D."/>
            <person name="Page L.E."/>
            <person name="Taylor H.L."/>
            <person name="Wang Z.T."/>
            <person name="Raymond J."/>
            <person name="Chen M."/>
            <person name="Blankenship R.E."/>
            <person name="Touchman J.W."/>
        </authorList>
    </citation>
    <scope>NUCLEOTIDE SEQUENCE [LARGE SCALE GENOMIC DNA]</scope>
    <source>
        <strain>ATCC 51547 / Ice1</strain>
    </source>
</reference>